<organism>
    <name type="scientific">Streptococcus suis (strain 98HAH33)</name>
    <dbReference type="NCBI Taxonomy" id="391296"/>
    <lineage>
        <taxon>Bacteria</taxon>
        <taxon>Bacillati</taxon>
        <taxon>Bacillota</taxon>
        <taxon>Bacilli</taxon>
        <taxon>Lactobacillales</taxon>
        <taxon>Streptococcaceae</taxon>
        <taxon>Streptococcus</taxon>
    </lineage>
</organism>
<accession>A4W0G0</accession>
<comment type="catalytic activity">
    <reaction evidence="1">
        <text>(6S)-5,6,7,8-tetrahydrofolate + formate + ATP = (6R)-10-formyltetrahydrofolate + ADP + phosphate</text>
        <dbReference type="Rhea" id="RHEA:20221"/>
        <dbReference type="ChEBI" id="CHEBI:15740"/>
        <dbReference type="ChEBI" id="CHEBI:30616"/>
        <dbReference type="ChEBI" id="CHEBI:43474"/>
        <dbReference type="ChEBI" id="CHEBI:57453"/>
        <dbReference type="ChEBI" id="CHEBI:195366"/>
        <dbReference type="ChEBI" id="CHEBI:456216"/>
        <dbReference type="EC" id="6.3.4.3"/>
    </reaction>
</comment>
<comment type="pathway">
    <text evidence="1">One-carbon metabolism; tetrahydrofolate interconversion.</text>
</comment>
<comment type="similarity">
    <text evidence="1">Belongs to the formate--tetrahydrofolate ligase family.</text>
</comment>
<sequence>MKTDIDIAQSITLKPITEIVEKVGISFDDIELYGKYKAKLSFDKINAVKDNAPGKLILVTAINPTPAGEGKSTITIGLADALSKIGKKTMIALREPSLGPVMGIKGGAAGGGYAQVLPMEDINLHFTGDMHAITTANNALSALIDNHIHQGNVIGIDQRRIIWKRVVDLNDRALRKVTVGLGGPLNGIPREDGFDITVASEIMAILCLATDINDLKERLANIVIGYRFDCSPVYVRDLAVEGALTLILKDAIKPNLVQTIYGTPAFVHGGPFANIAHGCNSVLATTTALRLADYTVTEAGFGADLGAEKFLDIKVPNLPKAPDAVVIVATLRALKMHGGVAKTELSAENVEAVKAGFSNLKRHVENIRKYGIPAVVAINEFVSDTAAEIAVLKELCAAIGVPVELASVWANGADGGVELAETVVATIDNQAASYQRLYKSEDSLEEKVTKIVTQIYGGTGVVFEKKARNQLTEFAKNGWDKLPVCMAKTQYSFSDDQFALGAPTDFDITVREFVPKLGAGFIVALTGDVMTMPGLPKAPVALNMDVAADGTAIGLF</sequence>
<protein>
    <recommendedName>
        <fullName evidence="1">Formate--tetrahydrofolate ligase</fullName>
        <ecNumber evidence="1">6.3.4.3</ecNumber>
    </recommendedName>
    <alternativeName>
        <fullName evidence="1">Formyltetrahydrofolate synthetase</fullName>
        <shortName evidence="1">FHS</shortName>
        <shortName evidence="1">FTHFS</shortName>
    </alternativeName>
</protein>
<evidence type="ECO:0000255" key="1">
    <source>
        <dbReference type="HAMAP-Rule" id="MF_01543"/>
    </source>
</evidence>
<keyword id="KW-0067">ATP-binding</keyword>
<keyword id="KW-0436">Ligase</keyword>
<keyword id="KW-0547">Nucleotide-binding</keyword>
<keyword id="KW-0554">One-carbon metabolism</keyword>
<name>FTHS_STRS2</name>
<feature type="chain" id="PRO_0000300549" description="Formate--tetrahydrofolate ligase">
    <location>
        <begin position="1"/>
        <end position="556"/>
    </location>
</feature>
<feature type="binding site" evidence="1">
    <location>
        <begin position="65"/>
        <end position="72"/>
    </location>
    <ligand>
        <name>ATP</name>
        <dbReference type="ChEBI" id="CHEBI:30616"/>
    </ligand>
</feature>
<gene>
    <name evidence="1" type="primary">fhs</name>
    <name type="ordered locus">SSU98_0691</name>
</gene>
<reference key="1">
    <citation type="journal article" date="2007" name="PLoS ONE">
        <title>A glimpse of streptococcal toxic shock syndrome from comparative genomics of S. suis 2 Chinese isolates.</title>
        <authorList>
            <person name="Chen C."/>
            <person name="Tang J."/>
            <person name="Dong W."/>
            <person name="Wang C."/>
            <person name="Feng Y."/>
            <person name="Wang J."/>
            <person name="Zheng F."/>
            <person name="Pan X."/>
            <person name="Liu D."/>
            <person name="Li M."/>
            <person name="Song Y."/>
            <person name="Zhu X."/>
            <person name="Sun H."/>
            <person name="Feng T."/>
            <person name="Guo Z."/>
            <person name="Ju A."/>
            <person name="Ge J."/>
            <person name="Dong Y."/>
            <person name="Sun W."/>
            <person name="Jiang Y."/>
            <person name="Wang J."/>
            <person name="Yan J."/>
            <person name="Yang H."/>
            <person name="Wang X."/>
            <person name="Gao G.F."/>
            <person name="Yang R."/>
            <person name="Wang J."/>
            <person name="Yu J."/>
        </authorList>
    </citation>
    <scope>NUCLEOTIDE SEQUENCE [LARGE SCALE GENOMIC DNA]</scope>
    <source>
        <strain>98HAH33</strain>
    </source>
</reference>
<proteinExistence type="inferred from homology"/>
<dbReference type="EC" id="6.3.4.3" evidence="1"/>
<dbReference type="EMBL" id="CP000408">
    <property type="protein sequence ID" value="ABP91849.1"/>
    <property type="molecule type" value="Genomic_DNA"/>
</dbReference>
<dbReference type="SMR" id="A4W0G0"/>
<dbReference type="KEGG" id="ssv:SSU98_0691"/>
<dbReference type="HOGENOM" id="CLU_003601_3_3_9"/>
<dbReference type="UniPathway" id="UPA00193"/>
<dbReference type="GO" id="GO:0005524">
    <property type="term" value="F:ATP binding"/>
    <property type="evidence" value="ECO:0007669"/>
    <property type="project" value="UniProtKB-UniRule"/>
</dbReference>
<dbReference type="GO" id="GO:0004329">
    <property type="term" value="F:formate-tetrahydrofolate ligase activity"/>
    <property type="evidence" value="ECO:0007669"/>
    <property type="project" value="UniProtKB-UniRule"/>
</dbReference>
<dbReference type="GO" id="GO:0035999">
    <property type="term" value="P:tetrahydrofolate interconversion"/>
    <property type="evidence" value="ECO:0007669"/>
    <property type="project" value="UniProtKB-UniRule"/>
</dbReference>
<dbReference type="CDD" id="cd00477">
    <property type="entry name" value="FTHFS"/>
    <property type="match status" value="1"/>
</dbReference>
<dbReference type="FunFam" id="3.30.1510.10:FF:000001">
    <property type="entry name" value="Formate--tetrahydrofolate ligase"/>
    <property type="match status" value="1"/>
</dbReference>
<dbReference type="FunFam" id="3.10.410.10:FF:000001">
    <property type="entry name" value="Putative formate--tetrahydrofolate ligase"/>
    <property type="match status" value="1"/>
</dbReference>
<dbReference type="Gene3D" id="3.30.1510.10">
    <property type="entry name" value="Domain 2, N(10)-formyltetrahydrofolate synthetase"/>
    <property type="match status" value="1"/>
</dbReference>
<dbReference type="Gene3D" id="3.10.410.10">
    <property type="entry name" value="Formyltetrahydrofolate synthetase, domain 3"/>
    <property type="match status" value="1"/>
</dbReference>
<dbReference type="Gene3D" id="3.40.50.300">
    <property type="entry name" value="P-loop containing nucleotide triphosphate hydrolases"/>
    <property type="match status" value="1"/>
</dbReference>
<dbReference type="HAMAP" id="MF_01543">
    <property type="entry name" value="FTHFS"/>
    <property type="match status" value="1"/>
</dbReference>
<dbReference type="InterPro" id="IPR000559">
    <property type="entry name" value="Formate_THF_ligase"/>
</dbReference>
<dbReference type="InterPro" id="IPR020628">
    <property type="entry name" value="Formate_THF_ligase_CS"/>
</dbReference>
<dbReference type="InterPro" id="IPR027417">
    <property type="entry name" value="P-loop_NTPase"/>
</dbReference>
<dbReference type="NCBIfam" id="NF010030">
    <property type="entry name" value="PRK13505.1"/>
    <property type="match status" value="1"/>
</dbReference>
<dbReference type="Pfam" id="PF01268">
    <property type="entry name" value="FTHFS"/>
    <property type="match status" value="1"/>
</dbReference>
<dbReference type="SUPFAM" id="SSF52540">
    <property type="entry name" value="P-loop containing nucleoside triphosphate hydrolases"/>
    <property type="match status" value="1"/>
</dbReference>
<dbReference type="PROSITE" id="PS00721">
    <property type="entry name" value="FTHFS_1"/>
    <property type="match status" value="1"/>
</dbReference>
<dbReference type="PROSITE" id="PS00722">
    <property type="entry name" value="FTHFS_2"/>
    <property type="match status" value="1"/>
</dbReference>